<evidence type="ECO:0000250" key="1"/>
<evidence type="ECO:0000256" key="2">
    <source>
        <dbReference type="SAM" id="MobiDB-lite"/>
    </source>
</evidence>
<evidence type="ECO:0000305" key="3"/>
<evidence type="ECO:0007829" key="4">
    <source>
        <dbReference type="PDB" id="2PX0"/>
    </source>
</evidence>
<evidence type="ECO:0007829" key="5">
    <source>
        <dbReference type="PDB" id="3SYN"/>
    </source>
</evidence>
<feature type="chain" id="PRO_0000101220" description="Flagellar biosynthesis protein FlhF">
    <location>
        <begin position="1"/>
        <end position="366"/>
    </location>
</feature>
<feature type="region of interest" description="Disordered" evidence="2">
    <location>
        <begin position="64"/>
        <end position="85"/>
    </location>
</feature>
<feature type="binding site" evidence="1">
    <location>
        <begin position="182"/>
        <end position="189"/>
    </location>
    <ligand>
        <name>GTP</name>
        <dbReference type="ChEBI" id="CHEBI:37565"/>
    </ligand>
</feature>
<feature type="binding site" evidence="1">
    <location>
        <begin position="259"/>
        <end position="263"/>
    </location>
    <ligand>
        <name>GTP</name>
        <dbReference type="ChEBI" id="CHEBI:37565"/>
    </ligand>
</feature>
<feature type="binding site" evidence="1">
    <location>
        <begin position="317"/>
        <end position="320"/>
    </location>
    <ligand>
        <name>GTP</name>
        <dbReference type="ChEBI" id="CHEBI:37565"/>
    </ligand>
</feature>
<feature type="helix" evidence="4">
    <location>
        <begin position="111"/>
        <end position="121"/>
    </location>
</feature>
<feature type="helix" evidence="4">
    <location>
        <begin position="126"/>
        <end position="138"/>
    </location>
</feature>
<feature type="strand" evidence="4">
    <location>
        <begin position="141"/>
        <end position="144"/>
    </location>
</feature>
<feature type="turn" evidence="4">
    <location>
        <begin position="148"/>
        <end position="150"/>
    </location>
</feature>
<feature type="helix" evidence="4">
    <location>
        <begin position="151"/>
        <end position="160"/>
    </location>
</feature>
<feature type="helix" evidence="4">
    <location>
        <begin position="166"/>
        <end position="168"/>
    </location>
</feature>
<feature type="strand" evidence="4">
    <location>
        <begin position="175"/>
        <end position="183"/>
    </location>
</feature>
<feature type="helix" evidence="4">
    <location>
        <begin position="188"/>
        <end position="201"/>
    </location>
</feature>
<feature type="strand" evidence="4">
    <location>
        <begin position="207"/>
        <end position="211"/>
    </location>
</feature>
<feature type="helix" evidence="4">
    <location>
        <begin position="219"/>
        <end position="227"/>
    </location>
</feature>
<feature type="turn" evidence="4">
    <location>
        <begin position="228"/>
        <end position="231"/>
    </location>
</feature>
<feature type="strand" evidence="5">
    <location>
        <begin position="234"/>
        <end position="236"/>
    </location>
</feature>
<feature type="helix" evidence="4">
    <location>
        <begin position="240"/>
        <end position="249"/>
    </location>
</feature>
<feature type="helix" evidence="4">
    <location>
        <begin position="250"/>
        <end position="252"/>
    </location>
</feature>
<feature type="strand" evidence="4">
    <location>
        <begin position="253"/>
        <end position="259"/>
    </location>
</feature>
<feature type="helix" evidence="4">
    <location>
        <begin position="268"/>
        <end position="277"/>
    </location>
</feature>
<feature type="strand" evidence="4">
    <location>
        <begin position="284"/>
        <end position="291"/>
    </location>
</feature>
<feature type="helix" evidence="4">
    <location>
        <begin position="296"/>
        <end position="302"/>
    </location>
</feature>
<feature type="turn" evidence="4">
    <location>
        <begin position="303"/>
        <end position="306"/>
    </location>
</feature>
<feature type="strand" evidence="4">
    <location>
        <begin position="307"/>
        <end position="309"/>
    </location>
</feature>
<feature type="strand" evidence="4">
    <location>
        <begin position="313"/>
        <end position="317"/>
    </location>
</feature>
<feature type="turn" evidence="4">
    <location>
        <begin position="319"/>
        <end position="321"/>
    </location>
</feature>
<feature type="helix" evidence="4">
    <location>
        <begin position="326"/>
        <end position="333"/>
    </location>
</feature>
<feature type="strand" evidence="4">
    <location>
        <begin position="340"/>
        <end position="342"/>
    </location>
</feature>
<feature type="turn" evidence="4">
    <location>
        <begin position="348"/>
        <end position="350"/>
    </location>
</feature>
<feature type="strand" evidence="5">
    <location>
        <begin position="351"/>
        <end position="353"/>
    </location>
</feature>
<feature type="helix" evidence="4">
    <location>
        <begin position="357"/>
        <end position="364"/>
    </location>
</feature>
<protein>
    <recommendedName>
        <fullName>Flagellar biosynthesis protein FlhF</fullName>
    </recommendedName>
    <alternativeName>
        <fullName>Flagella-associated GTP-binding protein</fullName>
    </alternativeName>
</protein>
<comment type="function">
    <text>Necessary for flagellar biosynthesis. May be involved in translocation of the flagellum.</text>
</comment>
<comment type="interaction">
    <interactant intactId="EBI-15652472">
        <id>Q01960</id>
    </interactant>
    <interactant intactId="EBI-15652472">
        <id>Q01960</id>
        <label>flhF</label>
    </interactant>
    <organismsDiffer>false</organismsDiffer>
    <experiments>2</experiments>
</comment>
<comment type="interaction">
    <interactant intactId="EBI-15652472">
        <id>Q01960</id>
    </interactant>
    <interactant intactId="EBI-15950871">
        <id>P40742</id>
        <label>ylxH</label>
    </interactant>
    <organismsDiffer>false</organismsDiffer>
    <experiments>9</experiments>
</comment>
<comment type="subcellular location">
    <subcellularLocation>
        <location evidence="1">Cell membrane</location>
        <topology evidence="1">Peripheral membrane protein</topology>
        <orientation evidence="1">Cytoplasmic side</orientation>
    </subcellularLocation>
</comment>
<comment type="similarity">
    <text evidence="3">Belongs to the GTP-binding SRP family.</text>
</comment>
<dbReference type="EMBL" id="X66445">
    <property type="protein sequence ID" value="CAA47062.1"/>
    <property type="molecule type" value="Genomic_DNA"/>
</dbReference>
<dbReference type="EMBL" id="AL009126">
    <property type="protein sequence ID" value="CAB13513.1"/>
    <property type="molecule type" value="Genomic_DNA"/>
</dbReference>
<dbReference type="PIR" id="S25277">
    <property type="entry name" value="S25277"/>
</dbReference>
<dbReference type="RefSeq" id="NP_389522.1">
    <property type="nucleotide sequence ID" value="NC_000964.3"/>
</dbReference>
<dbReference type="RefSeq" id="WP_003231945.1">
    <property type="nucleotide sequence ID" value="NZ_OZ025638.1"/>
</dbReference>
<dbReference type="PDB" id="2PX0">
    <property type="method" value="X-ray"/>
    <property type="resolution" value="3.00 A"/>
    <property type="chains" value="A/B/C/D/E/F/G/H=79-366"/>
</dbReference>
<dbReference type="PDB" id="2PX3">
    <property type="method" value="X-ray"/>
    <property type="resolution" value="3.20 A"/>
    <property type="chains" value="A=79-366"/>
</dbReference>
<dbReference type="PDB" id="3SYN">
    <property type="method" value="X-ray"/>
    <property type="resolution" value="3.06 A"/>
    <property type="chains" value="A/B/C/D=79-366"/>
</dbReference>
<dbReference type="PDBsum" id="2PX0"/>
<dbReference type="PDBsum" id="2PX3"/>
<dbReference type="PDBsum" id="3SYN"/>
<dbReference type="SMR" id="Q01960"/>
<dbReference type="DIP" id="DIP-46493N"/>
<dbReference type="FunCoup" id="Q01960">
    <property type="interactions" value="99"/>
</dbReference>
<dbReference type="IntAct" id="Q01960">
    <property type="interactions" value="1"/>
</dbReference>
<dbReference type="STRING" id="224308.BSU16400"/>
<dbReference type="PaxDb" id="224308-BSU16400"/>
<dbReference type="EnsemblBacteria" id="CAB13513">
    <property type="protein sequence ID" value="CAB13513"/>
    <property type="gene ID" value="BSU_16400"/>
</dbReference>
<dbReference type="GeneID" id="940021"/>
<dbReference type="KEGG" id="bsu:BSU16400"/>
<dbReference type="PATRIC" id="fig|224308.179.peg.1781"/>
<dbReference type="eggNOG" id="COG1419">
    <property type="taxonomic scope" value="Bacteria"/>
</dbReference>
<dbReference type="InParanoid" id="Q01960"/>
<dbReference type="OrthoDB" id="9778554at2"/>
<dbReference type="PhylomeDB" id="Q01960"/>
<dbReference type="BioCyc" id="BSUB:BSU16400-MONOMER"/>
<dbReference type="EvolutionaryTrace" id="Q01960"/>
<dbReference type="Proteomes" id="UP000001570">
    <property type="component" value="Chromosome"/>
</dbReference>
<dbReference type="GO" id="GO:0005886">
    <property type="term" value="C:plasma membrane"/>
    <property type="evidence" value="ECO:0000318"/>
    <property type="project" value="GO_Central"/>
</dbReference>
<dbReference type="GO" id="GO:0005525">
    <property type="term" value="F:GTP binding"/>
    <property type="evidence" value="ECO:0007669"/>
    <property type="project" value="UniProtKB-KW"/>
</dbReference>
<dbReference type="GO" id="GO:0003924">
    <property type="term" value="F:GTPase activity"/>
    <property type="evidence" value="ECO:0000318"/>
    <property type="project" value="GO_Central"/>
</dbReference>
<dbReference type="GO" id="GO:0042802">
    <property type="term" value="F:identical protein binding"/>
    <property type="evidence" value="ECO:0000353"/>
    <property type="project" value="IntAct"/>
</dbReference>
<dbReference type="GO" id="GO:0005047">
    <property type="term" value="F:signal recognition particle binding"/>
    <property type="evidence" value="ECO:0000318"/>
    <property type="project" value="GO_Central"/>
</dbReference>
<dbReference type="GO" id="GO:0044781">
    <property type="term" value="P:bacterial-type flagellum organization"/>
    <property type="evidence" value="ECO:0007669"/>
    <property type="project" value="UniProtKB-KW"/>
</dbReference>
<dbReference type="GO" id="GO:0006605">
    <property type="term" value="P:protein targeting"/>
    <property type="evidence" value="ECO:0000318"/>
    <property type="project" value="GO_Central"/>
</dbReference>
<dbReference type="GO" id="GO:0015031">
    <property type="term" value="P:protein transport"/>
    <property type="evidence" value="ECO:0007669"/>
    <property type="project" value="UniProtKB-KW"/>
</dbReference>
<dbReference type="GO" id="GO:0006614">
    <property type="term" value="P:SRP-dependent cotranslational protein targeting to membrane"/>
    <property type="evidence" value="ECO:0007669"/>
    <property type="project" value="InterPro"/>
</dbReference>
<dbReference type="CDD" id="cd17873">
    <property type="entry name" value="FlhF"/>
    <property type="match status" value="1"/>
</dbReference>
<dbReference type="FunFam" id="3.40.50.300:FF:000695">
    <property type="entry name" value="Flagellar biosynthesis regulator FlhF"/>
    <property type="match status" value="1"/>
</dbReference>
<dbReference type="Gene3D" id="1.20.120.1380">
    <property type="entry name" value="Flagellar FlhF biosynthesis protein, N domain"/>
    <property type="match status" value="1"/>
</dbReference>
<dbReference type="Gene3D" id="3.40.50.300">
    <property type="entry name" value="P-loop containing nucleotide triphosphate hydrolases"/>
    <property type="match status" value="1"/>
</dbReference>
<dbReference type="InterPro" id="IPR020006">
    <property type="entry name" value="FlhF"/>
</dbReference>
<dbReference type="InterPro" id="IPR047040">
    <property type="entry name" value="FlhF__GTPase_dom"/>
</dbReference>
<dbReference type="InterPro" id="IPR055157">
    <property type="entry name" value="FlhF_N"/>
</dbReference>
<dbReference type="InterPro" id="IPR027417">
    <property type="entry name" value="P-loop_NTPase"/>
</dbReference>
<dbReference type="InterPro" id="IPR000897">
    <property type="entry name" value="SRP54_GTPase_dom"/>
</dbReference>
<dbReference type="NCBIfam" id="TIGR03499">
    <property type="entry name" value="FlhF"/>
    <property type="match status" value="1"/>
</dbReference>
<dbReference type="PANTHER" id="PTHR43134:SF3">
    <property type="entry name" value="FLAGELLAR BIOSYNTHESIS PROTEIN FLHF"/>
    <property type="match status" value="1"/>
</dbReference>
<dbReference type="PANTHER" id="PTHR43134">
    <property type="entry name" value="SIGNAL RECOGNITION PARTICLE RECEPTOR SUBUNIT ALPHA"/>
    <property type="match status" value="1"/>
</dbReference>
<dbReference type="Pfam" id="PF22510">
    <property type="entry name" value="FlhF_N"/>
    <property type="match status" value="1"/>
</dbReference>
<dbReference type="Pfam" id="PF00448">
    <property type="entry name" value="SRP54"/>
    <property type="match status" value="1"/>
</dbReference>
<dbReference type="SMART" id="SM00962">
    <property type="entry name" value="SRP54"/>
    <property type="match status" value="1"/>
</dbReference>
<dbReference type="SUPFAM" id="SSF52540">
    <property type="entry name" value="P-loop containing nucleoside triphosphate hydrolases"/>
    <property type="match status" value="1"/>
</dbReference>
<reference key="1">
    <citation type="journal article" date="1992" name="Mol. Microbiol.">
        <title>flhF, a Bacillus subtilis flagellar gene that encodes a putative GTP-binding protein.</title>
        <authorList>
            <person name="Carpenter P.B."/>
            <person name="Hanlon D.W."/>
            <person name="Ordal G.W."/>
        </authorList>
    </citation>
    <scope>NUCLEOTIDE SEQUENCE [GENOMIC DNA]</scope>
    <source>
        <strain>168</strain>
    </source>
</reference>
<reference key="2">
    <citation type="journal article" date="1997" name="Nature">
        <title>The complete genome sequence of the Gram-positive bacterium Bacillus subtilis.</title>
        <authorList>
            <person name="Kunst F."/>
            <person name="Ogasawara N."/>
            <person name="Moszer I."/>
            <person name="Albertini A.M."/>
            <person name="Alloni G."/>
            <person name="Azevedo V."/>
            <person name="Bertero M.G."/>
            <person name="Bessieres P."/>
            <person name="Bolotin A."/>
            <person name="Borchert S."/>
            <person name="Borriss R."/>
            <person name="Boursier L."/>
            <person name="Brans A."/>
            <person name="Braun M."/>
            <person name="Brignell S.C."/>
            <person name="Bron S."/>
            <person name="Brouillet S."/>
            <person name="Bruschi C.V."/>
            <person name="Caldwell B."/>
            <person name="Capuano V."/>
            <person name="Carter N.M."/>
            <person name="Choi S.-K."/>
            <person name="Codani J.-J."/>
            <person name="Connerton I.F."/>
            <person name="Cummings N.J."/>
            <person name="Daniel R.A."/>
            <person name="Denizot F."/>
            <person name="Devine K.M."/>
            <person name="Duesterhoeft A."/>
            <person name="Ehrlich S.D."/>
            <person name="Emmerson P.T."/>
            <person name="Entian K.-D."/>
            <person name="Errington J."/>
            <person name="Fabret C."/>
            <person name="Ferrari E."/>
            <person name="Foulger D."/>
            <person name="Fritz C."/>
            <person name="Fujita M."/>
            <person name="Fujita Y."/>
            <person name="Fuma S."/>
            <person name="Galizzi A."/>
            <person name="Galleron N."/>
            <person name="Ghim S.-Y."/>
            <person name="Glaser P."/>
            <person name="Goffeau A."/>
            <person name="Golightly E.J."/>
            <person name="Grandi G."/>
            <person name="Guiseppi G."/>
            <person name="Guy B.J."/>
            <person name="Haga K."/>
            <person name="Haiech J."/>
            <person name="Harwood C.R."/>
            <person name="Henaut A."/>
            <person name="Hilbert H."/>
            <person name="Holsappel S."/>
            <person name="Hosono S."/>
            <person name="Hullo M.-F."/>
            <person name="Itaya M."/>
            <person name="Jones L.-M."/>
            <person name="Joris B."/>
            <person name="Karamata D."/>
            <person name="Kasahara Y."/>
            <person name="Klaerr-Blanchard M."/>
            <person name="Klein C."/>
            <person name="Kobayashi Y."/>
            <person name="Koetter P."/>
            <person name="Koningstein G."/>
            <person name="Krogh S."/>
            <person name="Kumano M."/>
            <person name="Kurita K."/>
            <person name="Lapidus A."/>
            <person name="Lardinois S."/>
            <person name="Lauber J."/>
            <person name="Lazarevic V."/>
            <person name="Lee S.-M."/>
            <person name="Levine A."/>
            <person name="Liu H."/>
            <person name="Masuda S."/>
            <person name="Mauel C."/>
            <person name="Medigue C."/>
            <person name="Medina N."/>
            <person name="Mellado R.P."/>
            <person name="Mizuno M."/>
            <person name="Moestl D."/>
            <person name="Nakai S."/>
            <person name="Noback M."/>
            <person name="Noone D."/>
            <person name="O'Reilly M."/>
            <person name="Ogawa K."/>
            <person name="Ogiwara A."/>
            <person name="Oudega B."/>
            <person name="Park S.-H."/>
            <person name="Parro V."/>
            <person name="Pohl T.M."/>
            <person name="Portetelle D."/>
            <person name="Porwollik S."/>
            <person name="Prescott A.M."/>
            <person name="Presecan E."/>
            <person name="Pujic P."/>
            <person name="Purnelle B."/>
            <person name="Rapoport G."/>
            <person name="Rey M."/>
            <person name="Reynolds S."/>
            <person name="Rieger M."/>
            <person name="Rivolta C."/>
            <person name="Rocha E."/>
            <person name="Roche B."/>
            <person name="Rose M."/>
            <person name="Sadaie Y."/>
            <person name="Sato T."/>
            <person name="Scanlan E."/>
            <person name="Schleich S."/>
            <person name="Schroeter R."/>
            <person name="Scoffone F."/>
            <person name="Sekiguchi J."/>
            <person name="Sekowska A."/>
            <person name="Seror S.J."/>
            <person name="Serror P."/>
            <person name="Shin B.-S."/>
            <person name="Soldo B."/>
            <person name="Sorokin A."/>
            <person name="Tacconi E."/>
            <person name="Takagi T."/>
            <person name="Takahashi H."/>
            <person name="Takemaru K."/>
            <person name="Takeuchi M."/>
            <person name="Tamakoshi A."/>
            <person name="Tanaka T."/>
            <person name="Terpstra P."/>
            <person name="Tognoni A."/>
            <person name="Tosato V."/>
            <person name="Uchiyama S."/>
            <person name="Vandenbol M."/>
            <person name="Vannier F."/>
            <person name="Vassarotti A."/>
            <person name="Viari A."/>
            <person name="Wambutt R."/>
            <person name="Wedler E."/>
            <person name="Wedler H."/>
            <person name="Weitzenegger T."/>
            <person name="Winters P."/>
            <person name="Wipat A."/>
            <person name="Yamamoto H."/>
            <person name="Yamane K."/>
            <person name="Yasumoto K."/>
            <person name="Yata K."/>
            <person name="Yoshida K."/>
            <person name="Yoshikawa H.-F."/>
            <person name="Zumstein E."/>
            <person name="Yoshikawa H."/>
            <person name="Danchin A."/>
        </authorList>
    </citation>
    <scope>NUCLEOTIDE SEQUENCE [LARGE SCALE GENOMIC DNA]</scope>
    <source>
        <strain>168</strain>
    </source>
</reference>
<keyword id="KW-0002">3D-structure</keyword>
<keyword id="KW-1005">Bacterial flagellum biogenesis</keyword>
<keyword id="KW-1006">Bacterial flagellum protein export</keyword>
<keyword id="KW-1003">Cell membrane</keyword>
<keyword id="KW-0342">GTP-binding</keyword>
<keyword id="KW-0472">Membrane</keyword>
<keyword id="KW-0547">Nucleotide-binding</keyword>
<keyword id="KW-0653">Protein transport</keyword>
<keyword id="KW-1185">Reference proteome</keyword>
<keyword id="KW-0813">Transport</keyword>
<sequence>MKIKKFTAASMQEAALLIRKELGNEAVILNSKKIKKRKWFGLVNKPAVEVIAVLDQDFLEKKTPQKAAEPKQTLKTPVSSPKIEERTYPPQIPAQQELGDFSAYQSVLPEPLRKAEKLLQETGIKESTKTNTLKKLLRFSVEAGGLTEENVVGKLQEILCDMLPSADKWQEPIHSKYIVLFGSTGAGKTTTLAKLAAISMLEKHKKIAFITTDTYRIAAVEQLKTYAELLQAPLEVCYTKEEFQQAKELFSEYDHVFVDTAGRNFKDPQYIDELKETIPFESSIQSFLVLSATAKYEDMKHIVKRFSSVPVNQYIFTKIDETTSLGSVFNILAESKIGVGFMTNGQNVPEDIQTVSPLGFVRMLCR</sequence>
<name>FLHF_BACSU</name>
<accession>Q01960</accession>
<organism>
    <name type="scientific">Bacillus subtilis (strain 168)</name>
    <dbReference type="NCBI Taxonomy" id="224308"/>
    <lineage>
        <taxon>Bacteria</taxon>
        <taxon>Bacillati</taxon>
        <taxon>Bacillota</taxon>
        <taxon>Bacilli</taxon>
        <taxon>Bacillales</taxon>
        <taxon>Bacillaceae</taxon>
        <taxon>Bacillus</taxon>
    </lineage>
</organism>
<proteinExistence type="evidence at protein level"/>
<gene>
    <name type="primary">flhF</name>
    <name type="ordered locus">BSU16400</name>
</gene>